<protein>
    <recommendedName>
        <fullName>Secretogranin-2</fullName>
    </recommendedName>
    <alternativeName>
        <fullName>Chromogranin-C</fullName>
    </alternativeName>
    <alternativeName>
        <fullName>Secretogranin II</fullName>
        <shortName>SgII</shortName>
    </alternativeName>
    <component>
        <recommendedName>
            <fullName>Secretoneurin</fullName>
            <shortName>SN</shortName>
        </recommendedName>
    </component>
    <component>
        <recommendedName>
            <fullName>Manserin</fullName>
        </recommendedName>
    </component>
</protein>
<feature type="signal peptide" evidence="4">
    <location>
        <begin position="1"/>
        <end position="27"/>
    </location>
</feature>
<feature type="propeptide" id="PRO_0000005452" evidence="4">
    <location>
        <begin position="28"/>
        <end position="30"/>
    </location>
</feature>
<feature type="chain" id="PRO_0000005453" description="Secretogranin-2">
    <location>
        <begin position="31"/>
        <end position="617"/>
    </location>
</feature>
<feature type="peptide" id="PRO_0000005454" description="Secretoneurin" evidence="2">
    <location>
        <begin position="182"/>
        <end position="214"/>
    </location>
</feature>
<feature type="peptide" id="PRO_0000432735" description="Manserin" evidence="1">
    <location>
        <begin position="527"/>
        <end position="566"/>
    </location>
</feature>
<feature type="region of interest" description="Disordered" evidence="5">
    <location>
        <begin position="120"/>
        <end position="143"/>
    </location>
</feature>
<feature type="region of interest" description="O-glycosylated at one site">
    <location>
        <begin position="182"/>
        <end position="200"/>
    </location>
</feature>
<feature type="region of interest" description="Disordered" evidence="5">
    <location>
        <begin position="257"/>
        <end position="302"/>
    </location>
</feature>
<feature type="region of interest" description="Disordered" evidence="5">
    <location>
        <begin position="552"/>
        <end position="583"/>
    </location>
</feature>
<feature type="compositionally biased region" description="Basic and acidic residues" evidence="5">
    <location>
        <begin position="257"/>
        <end position="284"/>
    </location>
</feature>
<feature type="compositionally biased region" description="Basic and acidic residues" evidence="5">
    <location>
        <begin position="293"/>
        <end position="302"/>
    </location>
</feature>
<feature type="modified residue" description="Sulfotyrosine" evidence="9">
    <location>
        <position position="151"/>
    </location>
</feature>
<feature type="modified residue" description="Phosphoserine" evidence="1">
    <location>
        <position position="174"/>
    </location>
</feature>
<feature type="modified residue" description="Phosphoserine" evidence="1">
    <location>
        <position position="268"/>
    </location>
</feature>
<feature type="modified residue" description="Phosphoserine" evidence="1">
    <location>
        <position position="432"/>
    </location>
</feature>
<feature type="modified residue" description="Phosphoserine" evidence="3">
    <location>
        <position position="532"/>
    </location>
</feature>
<feature type="modified residue" description="Phosphoserine" evidence="3">
    <location>
        <position position="555"/>
    </location>
</feature>
<feature type="modified residue" description="Phosphoserine" evidence="3">
    <location>
        <position position="556"/>
    </location>
</feature>
<feature type="sequence variant" id="VAR_031555" description="In dbSNP:rs16864976.">
    <original>Y</original>
    <variation>H</variation>
    <location>
        <position position="61"/>
    </location>
</feature>
<feature type="sequence variant" id="VAR_048755" description="In dbSNP:rs1438157.">
    <original>A</original>
    <variation>V</variation>
    <location>
        <position position="196"/>
    </location>
</feature>
<feature type="sequence variant" id="VAR_031556" description="In dbSNP:rs17852053." evidence="6">
    <original>D</original>
    <variation>G</variation>
    <location>
        <position position="294"/>
    </location>
</feature>
<feature type="sequence variant" id="VAR_031557" description="In dbSNP:rs17856669." evidence="6">
    <original>R</original>
    <variation>G</variation>
    <location>
        <position position="421"/>
    </location>
</feature>
<feature type="sequence variant" id="VAR_031558" description="In dbSNP:rs17852054." evidence="6">
    <original>D</original>
    <variation>G</variation>
    <location>
        <position position="535"/>
    </location>
</feature>
<feature type="sequence variant" id="VAR_031559" description="In dbSNP:rs36043001.">
    <original>P</original>
    <variation>L</variation>
    <location>
        <position position="564"/>
    </location>
</feature>
<feature type="sequence conflict" description="In Ref. 1; AAA36607." evidence="10" ref="1">
    <original>E</original>
    <variation>G</variation>
    <location>
        <position position="273"/>
    </location>
</feature>
<proteinExistence type="evidence at protein level"/>
<reference key="1">
    <citation type="journal article" date="1989" name="J. Biol. Chem.">
        <title>The primary structure of human secretogranin II, a widespread tyrosine-sulfated secretory granule protein that exhibits low pH- and calcium-induced aggregation.</title>
        <authorList>
            <person name="Gerdes H.-H."/>
            <person name="Rosa P."/>
            <person name="Phillips E."/>
            <person name="Baeuerle P.A."/>
            <person name="Frank R."/>
            <person name="Argos P."/>
            <person name="Huttner W.B."/>
        </authorList>
    </citation>
    <scope>NUCLEOTIDE SEQUENCE [MRNA]</scope>
    <scope>SULFATION AT TYR-151</scope>
    <source>
        <tissue>Pituitary</tissue>
    </source>
</reference>
<reference key="2">
    <citation type="journal article" date="2004" name="Nat. Genet.">
        <title>Complete sequencing and characterization of 21,243 full-length human cDNAs.</title>
        <authorList>
            <person name="Ota T."/>
            <person name="Suzuki Y."/>
            <person name="Nishikawa T."/>
            <person name="Otsuki T."/>
            <person name="Sugiyama T."/>
            <person name="Irie R."/>
            <person name="Wakamatsu A."/>
            <person name="Hayashi K."/>
            <person name="Sato H."/>
            <person name="Nagai K."/>
            <person name="Kimura K."/>
            <person name="Makita H."/>
            <person name="Sekine M."/>
            <person name="Obayashi M."/>
            <person name="Nishi T."/>
            <person name="Shibahara T."/>
            <person name="Tanaka T."/>
            <person name="Ishii S."/>
            <person name="Yamamoto J."/>
            <person name="Saito K."/>
            <person name="Kawai Y."/>
            <person name="Isono Y."/>
            <person name="Nakamura Y."/>
            <person name="Nagahari K."/>
            <person name="Murakami K."/>
            <person name="Yasuda T."/>
            <person name="Iwayanagi T."/>
            <person name="Wagatsuma M."/>
            <person name="Shiratori A."/>
            <person name="Sudo H."/>
            <person name="Hosoiri T."/>
            <person name="Kaku Y."/>
            <person name="Kodaira H."/>
            <person name="Kondo H."/>
            <person name="Sugawara M."/>
            <person name="Takahashi M."/>
            <person name="Kanda K."/>
            <person name="Yokoi T."/>
            <person name="Furuya T."/>
            <person name="Kikkawa E."/>
            <person name="Omura Y."/>
            <person name="Abe K."/>
            <person name="Kamihara K."/>
            <person name="Katsuta N."/>
            <person name="Sato K."/>
            <person name="Tanikawa M."/>
            <person name="Yamazaki M."/>
            <person name="Ninomiya K."/>
            <person name="Ishibashi T."/>
            <person name="Yamashita H."/>
            <person name="Murakawa K."/>
            <person name="Fujimori K."/>
            <person name="Tanai H."/>
            <person name="Kimata M."/>
            <person name="Watanabe M."/>
            <person name="Hiraoka S."/>
            <person name="Chiba Y."/>
            <person name="Ishida S."/>
            <person name="Ono Y."/>
            <person name="Takiguchi S."/>
            <person name="Watanabe S."/>
            <person name="Yosida M."/>
            <person name="Hotuta T."/>
            <person name="Kusano J."/>
            <person name="Kanehori K."/>
            <person name="Takahashi-Fujii A."/>
            <person name="Hara H."/>
            <person name="Tanase T.-O."/>
            <person name="Nomura Y."/>
            <person name="Togiya S."/>
            <person name="Komai F."/>
            <person name="Hara R."/>
            <person name="Takeuchi K."/>
            <person name="Arita M."/>
            <person name="Imose N."/>
            <person name="Musashino K."/>
            <person name="Yuuki H."/>
            <person name="Oshima A."/>
            <person name="Sasaki N."/>
            <person name="Aotsuka S."/>
            <person name="Yoshikawa Y."/>
            <person name="Matsunawa H."/>
            <person name="Ichihara T."/>
            <person name="Shiohata N."/>
            <person name="Sano S."/>
            <person name="Moriya S."/>
            <person name="Momiyama H."/>
            <person name="Satoh N."/>
            <person name="Takami S."/>
            <person name="Terashima Y."/>
            <person name="Suzuki O."/>
            <person name="Nakagawa S."/>
            <person name="Senoh A."/>
            <person name="Mizoguchi H."/>
            <person name="Goto Y."/>
            <person name="Shimizu F."/>
            <person name="Wakebe H."/>
            <person name="Hishigaki H."/>
            <person name="Watanabe T."/>
            <person name="Sugiyama A."/>
            <person name="Takemoto M."/>
            <person name="Kawakami B."/>
            <person name="Yamazaki M."/>
            <person name="Watanabe K."/>
            <person name="Kumagai A."/>
            <person name="Itakura S."/>
            <person name="Fukuzumi Y."/>
            <person name="Fujimori Y."/>
            <person name="Komiyama M."/>
            <person name="Tashiro H."/>
            <person name="Tanigami A."/>
            <person name="Fujiwara T."/>
            <person name="Ono T."/>
            <person name="Yamada K."/>
            <person name="Fujii Y."/>
            <person name="Ozaki K."/>
            <person name="Hirao M."/>
            <person name="Ohmori Y."/>
            <person name="Kawabata A."/>
            <person name="Hikiji T."/>
            <person name="Kobatake N."/>
            <person name="Inagaki H."/>
            <person name="Ikema Y."/>
            <person name="Okamoto S."/>
            <person name="Okitani R."/>
            <person name="Kawakami T."/>
            <person name="Noguchi S."/>
            <person name="Itoh T."/>
            <person name="Shigeta K."/>
            <person name="Senba T."/>
            <person name="Matsumura K."/>
            <person name="Nakajima Y."/>
            <person name="Mizuno T."/>
            <person name="Morinaga M."/>
            <person name="Sasaki M."/>
            <person name="Togashi T."/>
            <person name="Oyama M."/>
            <person name="Hata H."/>
            <person name="Watanabe M."/>
            <person name="Komatsu T."/>
            <person name="Mizushima-Sugano J."/>
            <person name="Satoh T."/>
            <person name="Shirai Y."/>
            <person name="Takahashi Y."/>
            <person name="Nakagawa K."/>
            <person name="Okumura K."/>
            <person name="Nagase T."/>
            <person name="Nomura N."/>
            <person name="Kikuchi H."/>
            <person name="Masuho Y."/>
            <person name="Yamashita R."/>
            <person name="Nakai K."/>
            <person name="Yada T."/>
            <person name="Nakamura Y."/>
            <person name="Ohara O."/>
            <person name="Isogai T."/>
            <person name="Sugano S."/>
        </authorList>
    </citation>
    <scope>NUCLEOTIDE SEQUENCE [LARGE SCALE MRNA]</scope>
    <source>
        <tissue>Caudate nucleus</tissue>
    </source>
</reference>
<reference key="3">
    <citation type="journal article" date="2005" name="Nature">
        <title>Generation and annotation of the DNA sequences of human chromosomes 2 and 4.</title>
        <authorList>
            <person name="Hillier L.W."/>
            <person name="Graves T.A."/>
            <person name="Fulton R.S."/>
            <person name="Fulton L.A."/>
            <person name="Pepin K.H."/>
            <person name="Minx P."/>
            <person name="Wagner-McPherson C."/>
            <person name="Layman D."/>
            <person name="Wylie K."/>
            <person name="Sekhon M."/>
            <person name="Becker M.C."/>
            <person name="Fewell G.A."/>
            <person name="Delehaunty K.D."/>
            <person name="Miner T.L."/>
            <person name="Nash W.E."/>
            <person name="Kremitzki C."/>
            <person name="Oddy L."/>
            <person name="Du H."/>
            <person name="Sun H."/>
            <person name="Bradshaw-Cordum H."/>
            <person name="Ali J."/>
            <person name="Carter J."/>
            <person name="Cordes M."/>
            <person name="Harris A."/>
            <person name="Isak A."/>
            <person name="van Brunt A."/>
            <person name="Nguyen C."/>
            <person name="Du F."/>
            <person name="Courtney L."/>
            <person name="Kalicki J."/>
            <person name="Ozersky P."/>
            <person name="Abbott S."/>
            <person name="Armstrong J."/>
            <person name="Belter E.A."/>
            <person name="Caruso L."/>
            <person name="Cedroni M."/>
            <person name="Cotton M."/>
            <person name="Davidson T."/>
            <person name="Desai A."/>
            <person name="Elliott G."/>
            <person name="Erb T."/>
            <person name="Fronick C."/>
            <person name="Gaige T."/>
            <person name="Haakenson W."/>
            <person name="Haglund K."/>
            <person name="Holmes A."/>
            <person name="Harkins R."/>
            <person name="Kim K."/>
            <person name="Kruchowski S.S."/>
            <person name="Strong C.M."/>
            <person name="Grewal N."/>
            <person name="Goyea E."/>
            <person name="Hou S."/>
            <person name="Levy A."/>
            <person name="Martinka S."/>
            <person name="Mead K."/>
            <person name="McLellan M.D."/>
            <person name="Meyer R."/>
            <person name="Randall-Maher J."/>
            <person name="Tomlinson C."/>
            <person name="Dauphin-Kohlberg S."/>
            <person name="Kozlowicz-Reilly A."/>
            <person name="Shah N."/>
            <person name="Swearengen-Shahid S."/>
            <person name="Snider J."/>
            <person name="Strong J.T."/>
            <person name="Thompson J."/>
            <person name="Yoakum M."/>
            <person name="Leonard S."/>
            <person name="Pearman C."/>
            <person name="Trani L."/>
            <person name="Radionenko M."/>
            <person name="Waligorski J.E."/>
            <person name="Wang C."/>
            <person name="Rock S.M."/>
            <person name="Tin-Wollam A.-M."/>
            <person name="Maupin R."/>
            <person name="Latreille P."/>
            <person name="Wendl M.C."/>
            <person name="Yang S.-P."/>
            <person name="Pohl C."/>
            <person name="Wallis J.W."/>
            <person name="Spieth J."/>
            <person name="Bieri T.A."/>
            <person name="Berkowicz N."/>
            <person name="Nelson J.O."/>
            <person name="Osborne J."/>
            <person name="Ding L."/>
            <person name="Meyer R."/>
            <person name="Sabo A."/>
            <person name="Shotland Y."/>
            <person name="Sinha P."/>
            <person name="Wohldmann P.E."/>
            <person name="Cook L.L."/>
            <person name="Hickenbotham M.T."/>
            <person name="Eldred J."/>
            <person name="Williams D."/>
            <person name="Jones T.A."/>
            <person name="She X."/>
            <person name="Ciccarelli F.D."/>
            <person name="Izaurralde E."/>
            <person name="Taylor J."/>
            <person name="Schmutz J."/>
            <person name="Myers R.M."/>
            <person name="Cox D.R."/>
            <person name="Huang X."/>
            <person name="McPherson J.D."/>
            <person name="Mardis E.R."/>
            <person name="Clifton S.W."/>
            <person name="Warren W.C."/>
            <person name="Chinwalla A.T."/>
            <person name="Eddy S.R."/>
            <person name="Marra M.A."/>
            <person name="Ovcharenko I."/>
            <person name="Furey T.S."/>
            <person name="Miller W."/>
            <person name="Eichler E.E."/>
            <person name="Bork P."/>
            <person name="Suyama M."/>
            <person name="Torrents D."/>
            <person name="Waterston R.H."/>
            <person name="Wilson R.K."/>
        </authorList>
    </citation>
    <scope>NUCLEOTIDE SEQUENCE [LARGE SCALE GENOMIC DNA]</scope>
</reference>
<reference key="4">
    <citation type="submission" date="2005-07" db="EMBL/GenBank/DDBJ databases">
        <authorList>
            <person name="Mural R.J."/>
            <person name="Istrail S."/>
            <person name="Sutton G.G."/>
            <person name="Florea L."/>
            <person name="Halpern A.L."/>
            <person name="Mobarry C.M."/>
            <person name="Lippert R."/>
            <person name="Walenz B."/>
            <person name="Shatkay H."/>
            <person name="Dew I."/>
            <person name="Miller J.R."/>
            <person name="Flanigan M.J."/>
            <person name="Edwards N.J."/>
            <person name="Bolanos R."/>
            <person name="Fasulo D."/>
            <person name="Halldorsson B.V."/>
            <person name="Hannenhalli S."/>
            <person name="Turner R."/>
            <person name="Yooseph S."/>
            <person name="Lu F."/>
            <person name="Nusskern D.R."/>
            <person name="Shue B.C."/>
            <person name="Zheng X.H."/>
            <person name="Zhong F."/>
            <person name="Delcher A.L."/>
            <person name="Huson D.H."/>
            <person name="Kravitz S.A."/>
            <person name="Mouchard L."/>
            <person name="Reinert K."/>
            <person name="Remington K.A."/>
            <person name="Clark A.G."/>
            <person name="Waterman M.S."/>
            <person name="Eichler E.E."/>
            <person name="Adams M.D."/>
            <person name="Hunkapiller M.W."/>
            <person name="Myers E.W."/>
            <person name="Venter J.C."/>
        </authorList>
    </citation>
    <scope>NUCLEOTIDE SEQUENCE [LARGE SCALE GENOMIC DNA]</scope>
</reference>
<reference key="5">
    <citation type="journal article" date="2004" name="Genome Res.">
        <title>The status, quality, and expansion of the NIH full-length cDNA project: the Mammalian Gene Collection (MGC).</title>
        <authorList>
            <consortium name="The MGC Project Team"/>
        </authorList>
    </citation>
    <scope>NUCLEOTIDE SEQUENCE [LARGE SCALE MRNA]</scope>
    <scope>VARIANTS GLY-294; GLY-421 AND GLY-535</scope>
    <source>
        <tissue>Brain</tissue>
    </source>
</reference>
<reference key="6">
    <citation type="journal article" date="1998" name="Neurosci. Lett.">
        <title>Formation and sequence analysis of secretoneurin, a neuropeptide derived from secretogranin II, in mammalian, bird, reptile, amphibian and fish brains.</title>
        <authorList>
            <person name="Leitner B."/>
            <person name="Schneitler C."/>
            <person name="Klocker H."/>
            <person name="Volknandt W."/>
            <person name="Zimmermann H."/>
            <person name="Winkler H."/>
            <person name="Fischer-Colbrie R."/>
        </authorList>
    </citation>
    <scope>NUCLEOTIDE SEQUENCE [MRNA] OF 182-214</scope>
</reference>
<reference key="7">
    <citation type="journal article" date="2006" name="Pituitary">
        <title>Phosphoproteomic analysis of the human pituitary.</title>
        <authorList>
            <person name="Beranova-Giorgianni S."/>
            <person name="Zhao Y."/>
            <person name="Desiderio D.M."/>
            <person name="Giorgianni F."/>
        </authorList>
    </citation>
    <scope>IDENTIFICATION BY MASS SPECTROMETRY [LARGE SCALE ANALYSIS]</scope>
    <source>
        <tissue>Pituitary</tissue>
    </source>
</reference>
<reference key="8">
    <citation type="journal article" date="2009" name="J. Endocrinol.">
        <title>Secretogranin II binds to secretogranin III and forms secretory granules with orexin, neuropeptide Y, and POMC.</title>
        <authorList>
            <person name="Hotta K."/>
            <person name="Hosaka M."/>
            <person name="Tanabe A."/>
            <person name="Takeuchi T."/>
        </authorList>
    </citation>
    <scope>INTERACTION WITH SCG3</scope>
    <scope>FUNCTION</scope>
</reference>
<reference key="9">
    <citation type="journal article" date="2013" name="J. Proteome Res.">
        <title>LC-MS/MS characterization of O-glycosylation sites and glycan structures of human cerebrospinal fluid glycoproteins.</title>
        <authorList>
            <person name="Halim A."/>
            <person name="Ruetschi U."/>
            <person name="Larson G."/>
            <person name="Nilsson J."/>
        </authorList>
    </citation>
    <scope>GLYCOSYLATION</scope>
    <scope>IDENTIFICATION BY MASS SPECTROMETRY</scope>
</reference>
<comment type="function">
    <text evidence="7">Neuroendocrine protein of the granin family that regulates the biogenesis of secretory granules.</text>
</comment>
<comment type="subunit">
    <text evidence="7">Interacts with Secretogranin III/SCG3.</text>
</comment>
<comment type="interaction">
    <interactant intactId="EBI-947132">
        <id>P13521</id>
    </interactant>
    <interactant intactId="EBI-747353">
        <id>Q8WXE1</id>
        <label>ATRIP</label>
    </interactant>
    <organismsDiffer>false</organismsDiffer>
    <experiments>3</experiments>
</comment>
<comment type="interaction">
    <interactant intactId="EBI-947132">
        <id>P13521</id>
    </interactant>
    <interactant intactId="EBI-12162999">
        <id>Q8WXD2</id>
        <label>SCG3</label>
    </interactant>
    <organismsDiffer>false</organismsDiffer>
    <experiments>2</experiments>
</comment>
<comment type="interaction">
    <interactant intactId="EBI-947132">
        <id>P13521</id>
    </interactant>
    <interactant intactId="EBI-741480">
        <id>Q9UMX0</id>
        <label>UBQLN1</label>
    </interactant>
    <organismsDiffer>false</organismsDiffer>
    <experiments>4</experiments>
</comment>
<comment type="subcellular location">
    <subcellularLocation>
        <location>Secreted</location>
    </subcellularLocation>
    <text>Neuroendocrine and endocrine secretory granules.</text>
</comment>
<comment type="PTM">
    <text evidence="8">O-glycosylated.</text>
</comment>
<comment type="miscellaneous">
    <text>Binds calcium with a low-affinity.</text>
</comment>
<comment type="similarity">
    <text evidence="10">Belongs to the chromogranin/secretogranin protein family.</text>
</comment>
<keyword id="KW-0106">Calcium</keyword>
<keyword id="KW-0165">Cleavage on pair of basic residues</keyword>
<keyword id="KW-0325">Glycoprotein</keyword>
<keyword id="KW-0597">Phosphoprotein</keyword>
<keyword id="KW-1267">Proteomics identification</keyword>
<keyword id="KW-1185">Reference proteome</keyword>
<keyword id="KW-0964">Secreted</keyword>
<keyword id="KW-0732">Signal</keyword>
<keyword id="KW-0765">Sulfation</keyword>
<organism>
    <name type="scientific">Homo sapiens</name>
    <name type="common">Human</name>
    <dbReference type="NCBI Taxonomy" id="9606"/>
    <lineage>
        <taxon>Eukaryota</taxon>
        <taxon>Metazoa</taxon>
        <taxon>Chordata</taxon>
        <taxon>Craniata</taxon>
        <taxon>Vertebrata</taxon>
        <taxon>Euteleostomi</taxon>
        <taxon>Mammalia</taxon>
        <taxon>Eutheria</taxon>
        <taxon>Euarchontoglires</taxon>
        <taxon>Primates</taxon>
        <taxon>Haplorrhini</taxon>
        <taxon>Catarrhini</taxon>
        <taxon>Hominidae</taxon>
        <taxon>Homo</taxon>
    </lineage>
</organism>
<accession>P13521</accession>
<accession>B2R662</accession>
<accession>Q53T11</accession>
<accession>Q8TBH3</accession>
<sequence>MAEAKTHWLGAALSLIPLIFLISGAEAASFQRNQLLQKEPDLRLENVQKFPSPEMIRALEYIENLRQQAHKEESSPDYNPYQGVSVPLQQKENGDESHLPERDSLSEEDWMRIILEALRQAENEPQSAPKENKPYALNSEKNFPMDMSDDYETQQWPERKLKHMQFPPMYEENSRDNPFKRTNEIVEEQYTPQSLATLESVFQELGKLTGPNNQKRERMDEEQKLYTDDEDDIYKANNIAYEDVVGGEDWNPVEEKIESQTQEEVRDSKENIEKNEQINDEMKRSGQLGIQEEDLRKESKDQLSDDVSKVIAYLKRLVNAAGSGRLQNGQNGERATRLFEKPLDSQSIYQLIEISRNLQIPPEDLIEMLKTGEKPNGSVEPERELDLPVDLDDISEADLDHPDLFQNRMLSKSGYPKTPGRAGTEALPDGLSVEDILNLLGMESAANQKTSYFPNPYNQEKVLPRLPYGAGRSRSNQLPKAAWIPHVENRQMAYENLNDKDQELGEYLARMLVKYPEIINSNQVKRVPGQGSSEDDLQEEEQIEQAIKEHLNQGSSQETDKLAPVSKRFPVGPPKNDDTPNRQYWDEDLLMKVLEYLNQEKAEKGREHIAKRAMENM</sequence>
<evidence type="ECO:0000250" key="1">
    <source>
        <dbReference type="UniProtKB" id="P10362"/>
    </source>
</evidence>
<evidence type="ECO:0000250" key="2">
    <source>
        <dbReference type="UniProtKB" id="P30945"/>
    </source>
</evidence>
<evidence type="ECO:0000250" key="3">
    <source>
        <dbReference type="UniProtKB" id="Q03517"/>
    </source>
</evidence>
<evidence type="ECO:0000255" key="4"/>
<evidence type="ECO:0000256" key="5">
    <source>
        <dbReference type="SAM" id="MobiDB-lite"/>
    </source>
</evidence>
<evidence type="ECO:0000269" key="6">
    <source>
    </source>
</evidence>
<evidence type="ECO:0000269" key="7">
    <source>
    </source>
</evidence>
<evidence type="ECO:0000269" key="8">
    <source>
    </source>
</evidence>
<evidence type="ECO:0000269" key="9">
    <source>
    </source>
</evidence>
<evidence type="ECO:0000305" key="10"/>
<gene>
    <name type="primary">SCG2</name>
    <name type="synonym">CHGC</name>
</gene>
<dbReference type="EMBL" id="M25756">
    <property type="protein sequence ID" value="AAA36607.1"/>
    <property type="molecule type" value="mRNA"/>
</dbReference>
<dbReference type="EMBL" id="AK312452">
    <property type="protein sequence ID" value="BAG35359.1"/>
    <property type="molecule type" value="mRNA"/>
</dbReference>
<dbReference type="EMBL" id="AC012512">
    <property type="protein sequence ID" value="AAY24243.1"/>
    <property type="molecule type" value="Genomic_DNA"/>
</dbReference>
<dbReference type="EMBL" id="CH471063">
    <property type="protein sequence ID" value="EAW70811.1"/>
    <property type="molecule type" value="Genomic_DNA"/>
</dbReference>
<dbReference type="EMBL" id="BC022509">
    <property type="protein sequence ID" value="AAH22509.1"/>
    <property type="molecule type" value="mRNA"/>
</dbReference>
<dbReference type="CCDS" id="CCDS2457.1"/>
<dbReference type="PIR" id="A34174">
    <property type="entry name" value="A34174"/>
</dbReference>
<dbReference type="RefSeq" id="NP_003460.2">
    <property type="nucleotide sequence ID" value="NM_003469.5"/>
</dbReference>
<dbReference type="SMR" id="P13521"/>
<dbReference type="BioGRID" id="113611">
    <property type="interactions" value="17"/>
</dbReference>
<dbReference type="CORUM" id="P13521"/>
<dbReference type="FunCoup" id="P13521">
    <property type="interactions" value="174"/>
</dbReference>
<dbReference type="IntAct" id="P13521">
    <property type="interactions" value="12"/>
</dbReference>
<dbReference type="MINT" id="P13521"/>
<dbReference type="STRING" id="9606.ENSP00000304133"/>
<dbReference type="iPTMnet" id="P13521"/>
<dbReference type="PhosphoSitePlus" id="P13521"/>
<dbReference type="BioMuta" id="SCG2"/>
<dbReference type="DMDM" id="143811457"/>
<dbReference type="jPOST" id="P13521"/>
<dbReference type="MassIVE" id="P13521"/>
<dbReference type="PaxDb" id="9606-ENSP00000304133"/>
<dbReference type="PeptideAtlas" id="P13521"/>
<dbReference type="ProteomicsDB" id="52923"/>
<dbReference type="Antibodypedia" id="2205">
    <property type="antibodies" value="339 antibodies from 33 providers"/>
</dbReference>
<dbReference type="DNASU" id="7857"/>
<dbReference type="Ensembl" id="ENST00000305409.3">
    <property type="protein sequence ID" value="ENSP00000304133.2"/>
    <property type="gene ID" value="ENSG00000171951.5"/>
</dbReference>
<dbReference type="GeneID" id="7857"/>
<dbReference type="KEGG" id="hsa:7857"/>
<dbReference type="MANE-Select" id="ENST00000305409.3">
    <property type="protein sequence ID" value="ENSP00000304133.2"/>
    <property type="RefSeq nucleotide sequence ID" value="NM_003469.5"/>
    <property type="RefSeq protein sequence ID" value="NP_003460.2"/>
</dbReference>
<dbReference type="UCSC" id="uc002vnm.4">
    <property type="organism name" value="human"/>
</dbReference>
<dbReference type="AGR" id="HGNC:10575"/>
<dbReference type="CTD" id="7857"/>
<dbReference type="DisGeNET" id="7857"/>
<dbReference type="GeneCards" id="SCG2"/>
<dbReference type="HGNC" id="HGNC:10575">
    <property type="gene designation" value="SCG2"/>
</dbReference>
<dbReference type="HPA" id="ENSG00000171951">
    <property type="expression patterns" value="Group enriched (adrenal gland, brain, pituitary gland)"/>
</dbReference>
<dbReference type="MIM" id="118930">
    <property type="type" value="gene"/>
</dbReference>
<dbReference type="neXtProt" id="NX_P13521"/>
<dbReference type="OpenTargets" id="ENSG00000171951"/>
<dbReference type="PharmGKB" id="PA34987"/>
<dbReference type="VEuPathDB" id="HostDB:ENSG00000171951"/>
<dbReference type="eggNOG" id="ENOG502QV5W">
    <property type="taxonomic scope" value="Eukaryota"/>
</dbReference>
<dbReference type="GeneTree" id="ENSGT00390000010895"/>
<dbReference type="HOGENOM" id="CLU_031294_0_0_1"/>
<dbReference type="InParanoid" id="P13521"/>
<dbReference type="OMA" id="RNAAYDD"/>
<dbReference type="OrthoDB" id="8894600at2759"/>
<dbReference type="PAN-GO" id="P13521">
    <property type="GO annotations" value="6 GO annotations based on evolutionary models"/>
</dbReference>
<dbReference type="PhylomeDB" id="P13521"/>
<dbReference type="TreeFam" id="TF334018"/>
<dbReference type="PathwayCommons" id="P13521"/>
<dbReference type="Reactome" id="R-HSA-381426">
    <property type="pathway name" value="Regulation of Insulin-like Growth Factor (IGF) transport and uptake by Insulin-like Growth Factor Binding Proteins (IGFBPs)"/>
</dbReference>
<dbReference type="Reactome" id="R-HSA-8957275">
    <property type="pathway name" value="Post-translational protein phosphorylation"/>
</dbReference>
<dbReference type="SignaLink" id="P13521"/>
<dbReference type="BioGRID-ORCS" id="7857">
    <property type="hits" value="13 hits in 1146 CRISPR screens"/>
</dbReference>
<dbReference type="ChiTaRS" id="SCG2">
    <property type="organism name" value="human"/>
</dbReference>
<dbReference type="GeneWiki" id="SCG2"/>
<dbReference type="GenomeRNAi" id="7857"/>
<dbReference type="Pharos" id="P13521">
    <property type="development level" value="Tbio"/>
</dbReference>
<dbReference type="PRO" id="PR:P13521"/>
<dbReference type="Proteomes" id="UP000005640">
    <property type="component" value="Chromosome 2"/>
</dbReference>
<dbReference type="RNAct" id="P13521">
    <property type="molecule type" value="protein"/>
</dbReference>
<dbReference type="Bgee" id="ENSG00000171951">
    <property type="expression patterns" value="Expressed in type B pancreatic cell and 146 other cell types or tissues"/>
</dbReference>
<dbReference type="ExpressionAtlas" id="P13521">
    <property type="expression patterns" value="baseline and differential"/>
</dbReference>
<dbReference type="GO" id="GO:0005788">
    <property type="term" value="C:endoplasmic reticulum lumen"/>
    <property type="evidence" value="ECO:0000304"/>
    <property type="project" value="Reactome"/>
</dbReference>
<dbReference type="GO" id="GO:0005615">
    <property type="term" value="C:extracellular space"/>
    <property type="evidence" value="ECO:0000314"/>
    <property type="project" value="HGNC-UCL"/>
</dbReference>
<dbReference type="GO" id="GO:0098992">
    <property type="term" value="C:neuronal dense core vesicle"/>
    <property type="evidence" value="ECO:0007669"/>
    <property type="project" value="Ensembl"/>
</dbReference>
<dbReference type="GO" id="GO:0030141">
    <property type="term" value="C:secretory granule"/>
    <property type="evidence" value="ECO:0000318"/>
    <property type="project" value="GO_Central"/>
</dbReference>
<dbReference type="GO" id="GO:0042056">
    <property type="term" value="F:chemoattractant activity"/>
    <property type="evidence" value="ECO:0000314"/>
    <property type="project" value="HGNC-UCL"/>
</dbReference>
<dbReference type="GO" id="GO:0005125">
    <property type="term" value="F:cytokine activity"/>
    <property type="evidence" value="ECO:0000314"/>
    <property type="project" value="HGNC-UCL"/>
</dbReference>
<dbReference type="GO" id="GO:0001525">
    <property type="term" value="P:angiogenesis"/>
    <property type="evidence" value="ECO:0000314"/>
    <property type="project" value="HGNC-UCL"/>
</dbReference>
<dbReference type="GO" id="GO:0043542">
    <property type="term" value="P:endothelial cell migration"/>
    <property type="evidence" value="ECO:0000304"/>
    <property type="project" value="HGNC-UCL"/>
</dbReference>
<dbReference type="GO" id="GO:0048245">
    <property type="term" value="P:eosinophil chemotaxis"/>
    <property type="evidence" value="ECO:0000314"/>
    <property type="project" value="HGNC-UCL"/>
</dbReference>
<dbReference type="GO" id="GO:0050930">
    <property type="term" value="P:induction of positive chemotaxis"/>
    <property type="evidence" value="ECO:0000314"/>
    <property type="project" value="HGNC-UCL"/>
</dbReference>
<dbReference type="GO" id="GO:0006954">
    <property type="term" value="P:inflammatory response"/>
    <property type="evidence" value="ECO:0000304"/>
    <property type="project" value="HGNC-UCL"/>
</dbReference>
<dbReference type="GO" id="GO:0035556">
    <property type="term" value="P:intracellular signal transduction"/>
    <property type="evidence" value="ECO:0000314"/>
    <property type="project" value="HGNC-UCL"/>
</dbReference>
<dbReference type="GO" id="GO:0000165">
    <property type="term" value="P:MAPK cascade"/>
    <property type="evidence" value="ECO:0000314"/>
    <property type="project" value="HGNC-UCL"/>
</dbReference>
<dbReference type="GO" id="GO:2000352">
    <property type="term" value="P:negative regulation of endothelial cell apoptotic process"/>
    <property type="evidence" value="ECO:0000314"/>
    <property type="project" value="BHF-UCL"/>
</dbReference>
<dbReference type="GO" id="GO:0001937">
    <property type="term" value="P:negative regulation of endothelial cell proliferation"/>
    <property type="evidence" value="ECO:0000304"/>
    <property type="project" value="HGNC-UCL"/>
</dbReference>
<dbReference type="GO" id="GO:2001237">
    <property type="term" value="P:negative regulation of extrinsic apoptotic signaling pathway"/>
    <property type="evidence" value="ECO:0000314"/>
    <property type="project" value="BHF-UCL"/>
</dbReference>
<dbReference type="GO" id="GO:0050918">
    <property type="term" value="P:positive chemotaxis"/>
    <property type="evidence" value="ECO:0000314"/>
    <property type="project" value="BHF-UCL"/>
</dbReference>
<dbReference type="GO" id="GO:0001938">
    <property type="term" value="P:positive regulation of endothelial cell proliferation"/>
    <property type="evidence" value="ECO:0000314"/>
    <property type="project" value="HGNC-UCL"/>
</dbReference>
<dbReference type="GO" id="GO:0009306">
    <property type="term" value="P:protein secretion"/>
    <property type="evidence" value="ECO:0000304"/>
    <property type="project" value="ProtInc"/>
</dbReference>
<dbReference type="InterPro" id="IPR018054">
    <property type="entry name" value="Chromogranin_CS"/>
</dbReference>
<dbReference type="InterPro" id="IPR001990">
    <property type="entry name" value="Granin"/>
</dbReference>
<dbReference type="InterPro" id="IPR038858">
    <property type="entry name" value="ScgII"/>
</dbReference>
<dbReference type="PANTHER" id="PTHR15119">
    <property type="entry name" value="SECRETOGRANIN II"/>
    <property type="match status" value="1"/>
</dbReference>
<dbReference type="PANTHER" id="PTHR15119:SF0">
    <property type="entry name" value="SECRETOGRANIN-2"/>
    <property type="match status" value="1"/>
</dbReference>
<dbReference type="Pfam" id="PF01271">
    <property type="entry name" value="Granin"/>
    <property type="match status" value="1"/>
</dbReference>
<dbReference type="PROSITE" id="PS00422">
    <property type="entry name" value="GRANINS_1"/>
    <property type="match status" value="1"/>
</dbReference>
<name>SCG2_HUMAN</name>